<feature type="chain" id="PRO_0000381300" description="Biotin synthase">
    <location>
        <begin position="1"/>
        <end position="334"/>
    </location>
</feature>
<feature type="domain" description="Radical SAM core" evidence="2">
    <location>
        <begin position="55"/>
        <end position="285"/>
    </location>
</feature>
<feature type="binding site" evidence="1">
    <location>
        <position position="73"/>
    </location>
    <ligand>
        <name>[4Fe-4S] cluster</name>
        <dbReference type="ChEBI" id="CHEBI:49883"/>
        <note>4Fe-4S-S-AdoMet</note>
    </ligand>
</feature>
<feature type="binding site" evidence="1">
    <location>
        <position position="77"/>
    </location>
    <ligand>
        <name>[4Fe-4S] cluster</name>
        <dbReference type="ChEBI" id="CHEBI:49883"/>
        <note>4Fe-4S-S-AdoMet</note>
    </ligand>
</feature>
<feature type="binding site" evidence="1">
    <location>
        <position position="80"/>
    </location>
    <ligand>
        <name>[4Fe-4S] cluster</name>
        <dbReference type="ChEBI" id="CHEBI:49883"/>
        <note>4Fe-4S-S-AdoMet</note>
    </ligand>
</feature>
<feature type="binding site" evidence="1">
    <location>
        <position position="152"/>
    </location>
    <ligand>
        <name>[2Fe-2S] cluster</name>
        <dbReference type="ChEBI" id="CHEBI:190135"/>
    </ligand>
</feature>
<feature type="binding site" evidence="1">
    <location>
        <position position="213"/>
    </location>
    <ligand>
        <name>[2Fe-2S] cluster</name>
        <dbReference type="ChEBI" id="CHEBI:190135"/>
    </ligand>
</feature>
<feature type="binding site" evidence="1">
    <location>
        <position position="283"/>
    </location>
    <ligand>
        <name>[2Fe-2S] cluster</name>
        <dbReference type="ChEBI" id="CHEBI:190135"/>
    </ligand>
</feature>
<reference key="1">
    <citation type="submission" date="2008-06" db="EMBL/GenBank/DDBJ databases">
        <title>Complete sequence of Chlorobaculum parvum NCIB 8327.</title>
        <authorList>
            <consortium name="US DOE Joint Genome Institute"/>
            <person name="Lucas S."/>
            <person name="Copeland A."/>
            <person name="Lapidus A."/>
            <person name="Glavina del Rio T."/>
            <person name="Dalin E."/>
            <person name="Tice H."/>
            <person name="Bruce D."/>
            <person name="Goodwin L."/>
            <person name="Pitluck S."/>
            <person name="Schmutz J."/>
            <person name="Larimer F."/>
            <person name="Land M."/>
            <person name="Hauser L."/>
            <person name="Kyrpides N."/>
            <person name="Mikhailova N."/>
            <person name="Zhao F."/>
            <person name="Li T."/>
            <person name="Liu Z."/>
            <person name="Overmann J."/>
            <person name="Bryant D.A."/>
            <person name="Richardson P."/>
        </authorList>
    </citation>
    <scope>NUCLEOTIDE SEQUENCE [LARGE SCALE GENOMIC DNA]</scope>
    <source>
        <strain>DSM 263 / NCIMB 8327</strain>
    </source>
</reference>
<accession>B3QLR7</accession>
<evidence type="ECO:0000255" key="1">
    <source>
        <dbReference type="HAMAP-Rule" id="MF_01694"/>
    </source>
</evidence>
<evidence type="ECO:0000255" key="2">
    <source>
        <dbReference type="PROSITE-ProRule" id="PRU01266"/>
    </source>
</evidence>
<sequence>MSSRLHPDIERAYRVLETGEPVSLELASALGRLPESEVLDLVSLANKVKNLYAPGEGGGVHACSIMNAKSGVCGENCRFCAQSKHNSAEVDVYGLVDEAKVLDQARALHEQGVGHFGIVTSGYGYRKVTPEFERILGMIDLLHRELPDLKVCASLGMLGDEPAAELARHGIAHYNINIQVDPGRYGELIADTHSVDERIDTIRRLRAHGIAVCCGGIIGTGETMQERIGMIFALQKLDVTVIPLNVLVPIDGTPLEGAAPVSVPEIAKTFAICRLAHPSKIIKFAAGRETVMKDFQGLLMLAGANGFLTGGYLTTRGRDMEADRQLAGQIARFS</sequence>
<keyword id="KW-0001">2Fe-2S</keyword>
<keyword id="KW-0004">4Fe-4S</keyword>
<keyword id="KW-0093">Biotin biosynthesis</keyword>
<keyword id="KW-0408">Iron</keyword>
<keyword id="KW-0411">Iron-sulfur</keyword>
<keyword id="KW-0479">Metal-binding</keyword>
<keyword id="KW-0949">S-adenosyl-L-methionine</keyword>
<keyword id="KW-0808">Transferase</keyword>
<organism>
    <name type="scientific">Chlorobaculum parvum (strain DSM 263 / NCIMB 8327)</name>
    <name type="common">Chlorobium vibrioforme subsp. thiosulfatophilum</name>
    <dbReference type="NCBI Taxonomy" id="517417"/>
    <lineage>
        <taxon>Bacteria</taxon>
        <taxon>Pseudomonadati</taxon>
        <taxon>Chlorobiota</taxon>
        <taxon>Chlorobiia</taxon>
        <taxon>Chlorobiales</taxon>
        <taxon>Chlorobiaceae</taxon>
        <taxon>Chlorobaculum</taxon>
    </lineage>
</organism>
<protein>
    <recommendedName>
        <fullName evidence="1">Biotin synthase</fullName>
        <ecNumber evidence="1">2.8.1.6</ecNumber>
    </recommendedName>
</protein>
<comment type="function">
    <text evidence="1">Catalyzes the conversion of dethiobiotin (DTB) to biotin by the insertion of a sulfur atom into dethiobiotin via a radical-based mechanism.</text>
</comment>
<comment type="catalytic activity">
    <reaction evidence="1">
        <text>(4R,5S)-dethiobiotin + (sulfur carrier)-SH + 2 reduced [2Fe-2S]-[ferredoxin] + 2 S-adenosyl-L-methionine = (sulfur carrier)-H + biotin + 2 5'-deoxyadenosine + 2 L-methionine + 2 oxidized [2Fe-2S]-[ferredoxin]</text>
        <dbReference type="Rhea" id="RHEA:22060"/>
        <dbReference type="Rhea" id="RHEA-COMP:10000"/>
        <dbReference type="Rhea" id="RHEA-COMP:10001"/>
        <dbReference type="Rhea" id="RHEA-COMP:14737"/>
        <dbReference type="Rhea" id="RHEA-COMP:14739"/>
        <dbReference type="ChEBI" id="CHEBI:17319"/>
        <dbReference type="ChEBI" id="CHEBI:29917"/>
        <dbReference type="ChEBI" id="CHEBI:33737"/>
        <dbReference type="ChEBI" id="CHEBI:33738"/>
        <dbReference type="ChEBI" id="CHEBI:57586"/>
        <dbReference type="ChEBI" id="CHEBI:57844"/>
        <dbReference type="ChEBI" id="CHEBI:59789"/>
        <dbReference type="ChEBI" id="CHEBI:64428"/>
        <dbReference type="ChEBI" id="CHEBI:149473"/>
        <dbReference type="EC" id="2.8.1.6"/>
    </reaction>
</comment>
<comment type="cofactor">
    <cofactor evidence="1">
        <name>[4Fe-4S] cluster</name>
        <dbReference type="ChEBI" id="CHEBI:49883"/>
    </cofactor>
    <text evidence="1">Binds 1 [4Fe-4S] cluster. The cluster is coordinated with 3 cysteines and an exchangeable S-adenosyl-L-methionine.</text>
</comment>
<comment type="cofactor">
    <cofactor evidence="1">
        <name>[2Fe-2S] cluster</name>
        <dbReference type="ChEBI" id="CHEBI:190135"/>
    </cofactor>
    <text evidence="1">Binds 1 [2Fe-2S] cluster. The cluster is coordinated with 3 cysteines and 1 arginine.</text>
</comment>
<comment type="pathway">
    <text evidence="1">Cofactor biosynthesis; biotin biosynthesis; biotin from 7,8-diaminononanoate: step 2/2.</text>
</comment>
<comment type="subunit">
    <text evidence="1">Homodimer.</text>
</comment>
<comment type="similarity">
    <text evidence="1">Belongs to the radical SAM superfamily. Biotin synthase family.</text>
</comment>
<gene>
    <name evidence="1" type="primary">bioB</name>
    <name type="ordered locus">Cpar_2016</name>
</gene>
<dbReference type="EC" id="2.8.1.6" evidence="1"/>
<dbReference type="EMBL" id="CP001099">
    <property type="protein sequence ID" value="ACF12403.1"/>
    <property type="molecule type" value="Genomic_DNA"/>
</dbReference>
<dbReference type="RefSeq" id="WP_012503236.1">
    <property type="nucleotide sequence ID" value="NC_011027.1"/>
</dbReference>
<dbReference type="SMR" id="B3QLR7"/>
<dbReference type="STRING" id="517417.Cpar_2016"/>
<dbReference type="KEGG" id="cpc:Cpar_2016"/>
<dbReference type="eggNOG" id="COG0502">
    <property type="taxonomic scope" value="Bacteria"/>
</dbReference>
<dbReference type="HOGENOM" id="CLU_033172_2_1_10"/>
<dbReference type="OrthoDB" id="9786826at2"/>
<dbReference type="UniPathway" id="UPA00078">
    <property type="reaction ID" value="UER00162"/>
</dbReference>
<dbReference type="Proteomes" id="UP000008811">
    <property type="component" value="Chromosome"/>
</dbReference>
<dbReference type="GO" id="GO:0051537">
    <property type="term" value="F:2 iron, 2 sulfur cluster binding"/>
    <property type="evidence" value="ECO:0007669"/>
    <property type="project" value="UniProtKB-KW"/>
</dbReference>
<dbReference type="GO" id="GO:0051539">
    <property type="term" value="F:4 iron, 4 sulfur cluster binding"/>
    <property type="evidence" value="ECO:0007669"/>
    <property type="project" value="UniProtKB-KW"/>
</dbReference>
<dbReference type="GO" id="GO:0004076">
    <property type="term" value="F:biotin synthase activity"/>
    <property type="evidence" value="ECO:0007669"/>
    <property type="project" value="UniProtKB-UniRule"/>
</dbReference>
<dbReference type="GO" id="GO:0005506">
    <property type="term" value="F:iron ion binding"/>
    <property type="evidence" value="ECO:0007669"/>
    <property type="project" value="UniProtKB-UniRule"/>
</dbReference>
<dbReference type="GO" id="GO:0009102">
    <property type="term" value="P:biotin biosynthetic process"/>
    <property type="evidence" value="ECO:0007669"/>
    <property type="project" value="UniProtKB-UniRule"/>
</dbReference>
<dbReference type="CDD" id="cd01335">
    <property type="entry name" value="Radical_SAM"/>
    <property type="match status" value="1"/>
</dbReference>
<dbReference type="Gene3D" id="3.20.20.70">
    <property type="entry name" value="Aldolase class I"/>
    <property type="match status" value="1"/>
</dbReference>
<dbReference type="HAMAP" id="MF_01694">
    <property type="entry name" value="BioB"/>
    <property type="match status" value="1"/>
</dbReference>
<dbReference type="InterPro" id="IPR013785">
    <property type="entry name" value="Aldolase_TIM"/>
</dbReference>
<dbReference type="InterPro" id="IPR010722">
    <property type="entry name" value="BATS_dom"/>
</dbReference>
<dbReference type="InterPro" id="IPR002684">
    <property type="entry name" value="Biotin_synth/BioAB"/>
</dbReference>
<dbReference type="InterPro" id="IPR024177">
    <property type="entry name" value="Biotin_synthase"/>
</dbReference>
<dbReference type="InterPro" id="IPR006638">
    <property type="entry name" value="Elp3/MiaA/NifB-like_rSAM"/>
</dbReference>
<dbReference type="InterPro" id="IPR007197">
    <property type="entry name" value="rSAM"/>
</dbReference>
<dbReference type="NCBIfam" id="TIGR00433">
    <property type="entry name" value="bioB"/>
    <property type="match status" value="1"/>
</dbReference>
<dbReference type="PANTHER" id="PTHR22976">
    <property type="entry name" value="BIOTIN SYNTHASE"/>
    <property type="match status" value="1"/>
</dbReference>
<dbReference type="PANTHER" id="PTHR22976:SF2">
    <property type="entry name" value="BIOTIN SYNTHASE, MITOCHONDRIAL"/>
    <property type="match status" value="1"/>
</dbReference>
<dbReference type="Pfam" id="PF06968">
    <property type="entry name" value="BATS"/>
    <property type="match status" value="1"/>
</dbReference>
<dbReference type="Pfam" id="PF04055">
    <property type="entry name" value="Radical_SAM"/>
    <property type="match status" value="1"/>
</dbReference>
<dbReference type="PIRSF" id="PIRSF001619">
    <property type="entry name" value="Biotin_synth"/>
    <property type="match status" value="1"/>
</dbReference>
<dbReference type="SFLD" id="SFLDG01060">
    <property type="entry name" value="BATS_domain_containing"/>
    <property type="match status" value="1"/>
</dbReference>
<dbReference type="SFLD" id="SFLDG01278">
    <property type="entry name" value="biotin_synthase_like"/>
    <property type="match status" value="1"/>
</dbReference>
<dbReference type="SMART" id="SM00876">
    <property type="entry name" value="BATS"/>
    <property type="match status" value="1"/>
</dbReference>
<dbReference type="SMART" id="SM00729">
    <property type="entry name" value="Elp3"/>
    <property type="match status" value="1"/>
</dbReference>
<dbReference type="SUPFAM" id="SSF102114">
    <property type="entry name" value="Radical SAM enzymes"/>
    <property type="match status" value="1"/>
</dbReference>
<dbReference type="PROSITE" id="PS51918">
    <property type="entry name" value="RADICAL_SAM"/>
    <property type="match status" value="1"/>
</dbReference>
<proteinExistence type="inferred from homology"/>
<name>BIOB_CHLP8</name>